<accession>A7HBM9</accession>
<feature type="chain" id="PRO_1000052178" description="Large ribosomal subunit protein uL24">
    <location>
        <begin position="1"/>
        <end position="104"/>
    </location>
</feature>
<feature type="region of interest" description="Disordered" evidence="2">
    <location>
        <begin position="85"/>
        <end position="104"/>
    </location>
</feature>
<feature type="compositionally biased region" description="Basic and acidic residues" evidence="2">
    <location>
        <begin position="85"/>
        <end position="96"/>
    </location>
</feature>
<proteinExistence type="inferred from homology"/>
<keyword id="KW-1185">Reference proteome</keyword>
<keyword id="KW-0687">Ribonucleoprotein</keyword>
<keyword id="KW-0689">Ribosomal protein</keyword>
<keyword id="KW-0694">RNA-binding</keyword>
<keyword id="KW-0699">rRNA-binding</keyword>
<organism>
    <name type="scientific">Anaeromyxobacter sp. (strain Fw109-5)</name>
    <dbReference type="NCBI Taxonomy" id="404589"/>
    <lineage>
        <taxon>Bacteria</taxon>
        <taxon>Pseudomonadati</taxon>
        <taxon>Myxococcota</taxon>
        <taxon>Myxococcia</taxon>
        <taxon>Myxococcales</taxon>
        <taxon>Cystobacterineae</taxon>
        <taxon>Anaeromyxobacteraceae</taxon>
        <taxon>Anaeromyxobacter</taxon>
    </lineage>
</organism>
<name>RL24_ANADF</name>
<protein>
    <recommendedName>
        <fullName evidence="1">Large ribosomal subunit protein uL24</fullName>
    </recommendedName>
    <alternativeName>
        <fullName evidence="3">50S ribosomal protein L24</fullName>
    </alternativeName>
</protein>
<gene>
    <name evidence="1" type="primary">rplX</name>
    <name type="ordered locus">Anae109_1922</name>
</gene>
<comment type="function">
    <text evidence="1">One of two assembly initiator proteins, it binds directly to the 5'-end of the 23S rRNA, where it nucleates assembly of the 50S subunit.</text>
</comment>
<comment type="function">
    <text evidence="1">One of the proteins that surrounds the polypeptide exit tunnel on the outside of the subunit.</text>
</comment>
<comment type="subunit">
    <text evidence="1">Part of the 50S ribosomal subunit.</text>
</comment>
<comment type="similarity">
    <text evidence="1">Belongs to the universal ribosomal protein uL24 family.</text>
</comment>
<evidence type="ECO:0000255" key="1">
    <source>
        <dbReference type="HAMAP-Rule" id="MF_01326"/>
    </source>
</evidence>
<evidence type="ECO:0000256" key="2">
    <source>
        <dbReference type="SAM" id="MobiDB-lite"/>
    </source>
</evidence>
<evidence type="ECO:0000305" key="3"/>
<reference key="1">
    <citation type="journal article" date="2015" name="Genome Announc.">
        <title>Complete genome sequence of Anaeromyxobacter sp. Fw109-5, an anaerobic, metal-reducing bacterium isolated from a contaminated subsurface environment.</title>
        <authorList>
            <person name="Hwang C."/>
            <person name="Copeland A."/>
            <person name="Lucas S."/>
            <person name="Lapidus A."/>
            <person name="Barry K."/>
            <person name="Glavina Del Rio T."/>
            <person name="Dalin E."/>
            <person name="Tice H."/>
            <person name="Pitluck S."/>
            <person name="Sims D."/>
            <person name="Brettin T."/>
            <person name="Bruce D.C."/>
            <person name="Detter J.C."/>
            <person name="Han C.S."/>
            <person name="Schmutz J."/>
            <person name="Larimer F.W."/>
            <person name="Land M.L."/>
            <person name="Hauser L.J."/>
            <person name="Kyrpides N."/>
            <person name="Lykidis A."/>
            <person name="Richardson P."/>
            <person name="Belieav A."/>
            <person name="Sanford R.A."/>
            <person name="Loeffler F.E."/>
            <person name="Fields M.W."/>
        </authorList>
    </citation>
    <scope>NUCLEOTIDE SEQUENCE [LARGE SCALE GENOMIC DNA]</scope>
    <source>
        <strain>Fw109-5</strain>
    </source>
</reference>
<dbReference type="EMBL" id="CP000769">
    <property type="protein sequence ID" value="ABS26125.1"/>
    <property type="molecule type" value="Genomic_DNA"/>
</dbReference>
<dbReference type="RefSeq" id="WP_012096704.1">
    <property type="nucleotide sequence ID" value="NC_009675.1"/>
</dbReference>
<dbReference type="SMR" id="A7HBM9"/>
<dbReference type="STRING" id="404589.Anae109_1922"/>
<dbReference type="KEGG" id="afw:Anae109_1922"/>
<dbReference type="eggNOG" id="COG0198">
    <property type="taxonomic scope" value="Bacteria"/>
</dbReference>
<dbReference type="HOGENOM" id="CLU_093315_2_3_7"/>
<dbReference type="OrthoDB" id="9807419at2"/>
<dbReference type="Proteomes" id="UP000006382">
    <property type="component" value="Chromosome"/>
</dbReference>
<dbReference type="GO" id="GO:1990904">
    <property type="term" value="C:ribonucleoprotein complex"/>
    <property type="evidence" value="ECO:0007669"/>
    <property type="project" value="UniProtKB-KW"/>
</dbReference>
<dbReference type="GO" id="GO:0005840">
    <property type="term" value="C:ribosome"/>
    <property type="evidence" value="ECO:0007669"/>
    <property type="project" value="UniProtKB-KW"/>
</dbReference>
<dbReference type="GO" id="GO:0019843">
    <property type="term" value="F:rRNA binding"/>
    <property type="evidence" value="ECO:0007669"/>
    <property type="project" value="UniProtKB-UniRule"/>
</dbReference>
<dbReference type="GO" id="GO:0003735">
    <property type="term" value="F:structural constituent of ribosome"/>
    <property type="evidence" value="ECO:0007669"/>
    <property type="project" value="InterPro"/>
</dbReference>
<dbReference type="GO" id="GO:0006412">
    <property type="term" value="P:translation"/>
    <property type="evidence" value="ECO:0007669"/>
    <property type="project" value="UniProtKB-UniRule"/>
</dbReference>
<dbReference type="CDD" id="cd06089">
    <property type="entry name" value="KOW_RPL26"/>
    <property type="match status" value="1"/>
</dbReference>
<dbReference type="Gene3D" id="2.30.30.30">
    <property type="match status" value="1"/>
</dbReference>
<dbReference type="HAMAP" id="MF_01326_B">
    <property type="entry name" value="Ribosomal_uL24_B"/>
    <property type="match status" value="1"/>
</dbReference>
<dbReference type="InterPro" id="IPR005824">
    <property type="entry name" value="KOW"/>
</dbReference>
<dbReference type="InterPro" id="IPR014722">
    <property type="entry name" value="Rib_uL2_dom2"/>
</dbReference>
<dbReference type="InterPro" id="IPR003256">
    <property type="entry name" value="Ribosomal_uL24"/>
</dbReference>
<dbReference type="InterPro" id="IPR005825">
    <property type="entry name" value="Ribosomal_uL24_CS"/>
</dbReference>
<dbReference type="InterPro" id="IPR041988">
    <property type="entry name" value="Ribosomal_uL24_KOW"/>
</dbReference>
<dbReference type="InterPro" id="IPR008991">
    <property type="entry name" value="Translation_prot_SH3-like_sf"/>
</dbReference>
<dbReference type="NCBIfam" id="TIGR01079">
    <property type="entry name" value="rplX_bact"/>
    <property type="match status" value="1"/>
</dbReference>
<dbReference type="PANTHER" id="PTHR12903">
    <property type="entry name" value="MITOCHONDRIAL RIBOSOMAL PROTEIN L24"/>
    <property type="match status" value="1"/>
</dbReference>
<dbReference type="Pfam" id="PF00467">
    <property type="entry name" value="KOW"/>
    <property type="match status" value="1"/>
</dbReference>
<dbReference type="Pfam" id="PF17136">
    <property type="entry name" value="ribosomal_L24"/>
    <property type="match status" value="1"/>
</dbReference>
<dbReference type="SMART" id="SM00739">
    <property type="entry name" value="KOW"/>
    <property type="match status" value="1"/>
</dbReference>
<dbReference type="SUPFAM" id="SSF50104">
    <property type="entry name" value="Translation proteins SH3-like domain"/>
    <property type="match status" value="1"/>
</dbReference>
<dbReference type="PROSITE" id="PS01108">
    <property type="entry name" value="RIBOSOMAL_L24"/>
    <property type="match status" value="1"/>
</dbReference>
<sequence length="104" mass="11592">MPGIRKGDTVKIISGKEKGKQGKVLELLPEKGRVRIEKLMLVKRHQKKGRSQATPEGGIIEKEGTVAISNVMVLVGDKPVRREKIKRELGAKEKARADRRKTAK</sequence>